<proteinExistence type="inferred from homology"/>
<sequence length="155" mass="17748">MAKGEGKVVAQNKKARHDYTIVDTLEAGMVLTGTEIKSVRAARINLKDGFAQVKNGEVWLSNVHIAPYEEGNIWNQEPERRRKLLLHKKQIQKLEQETKGTGMTLVPLKVYIKDGYAKLLLGLAKGKHDYDKRESIKRREQNRDIARVMKAVNQR</sequence>
<reference key="1">
    <citation type="journal article" date="2010" name="Genome Biol.">
        <title>Structure and dynamics of the pan-genome of Streptococcus pneumoniae and closely related species.</title>
        <authorList>
            <person name="Donati C."/>
            <person name="Hiller N.L."/>
            <person name="Tettelin H."/>
            <person name="Muzzi A."/>
            <person name="Croucher N.J."/>
            <person name="Angiuoli S.V."/>
            <person name="Oggioni M."/>
            <person name="Dunning Hotopp J.C."/>
            <person name="Hu F.Z."/>
            <person name="Riley D.R."/>
            <person name="Covacci A."/>
            <person name="Mitchell T.J."/>
            <person name="Bentley S.D."/>
            <person name="Kilian M."/>
            <person name="Ehrlich G.D."/>
            <person name="Rappuoli R."/>
            <person name="Moxon E.R."/>
            <person name="Masignani V."/>
        </authorList>
    </citation>
    <scope>NUCLEOTIDE SEQUENCE [LARGE SCALE GENOMIC DNA]</scope>
    <source>
        <strain>Taiwan19F-14</strain>
    </source>
</reference>
<feature type="chain" id="PRO_1000197630" description="SsrA-binding protein">
    <location>
        <begin position="1"/>
        <end position="155"/>
    </location>
</feature>
<gene>
    <name evidence="1" type="primary">smpB</name>
    <name type="ordered locus">SPT_1227</name>
</gene>
<dbReference type="EMBL" id="CP000921">
    <property type="protein sequence ID" value="ACO24041.1"/>
    <property type="molecule type" value="Genomic_DNA"/>
</dbReference>
<dbReference type="RefSeq" id="WP_001051750.1">
    <property type="nucleotide sequence ID" value="NC_012469.1"/>
</dbReference>
<dbReference type="SMR" id="C1CRS4"/>
<dbReference type="GeneID" id="93739761"/>
<dbReference type="KEGG" id="snt:SPT_1227"/>
<dbReference type="HOGENOM" id="CLU_108953_0_0_9"/>
<dbReference type="GO" id="GO:0005829">
    <property type="term" value="C:cytosol"/>
    <property type="evidence" value="ECO:0007669"/>
    <property type="project" value="TreeGrafter"/>
</dbReference>
<dbReference type="GO" id="GO:0003723">
    <property type="term" value="F:RNA binding"/>
    <property type="evidence" value="ECO:0007669"/>
    <property type="project" value="UniProtKB-UniRule"/>
</dbReference>
<dbReference type="GO" id="GO:0070929">
    <property type="term" value="P:trans-translation"/>
    <property type="evidence" value="ECO:0007669"/>
    <property type="project" value="UniProtKB-UniRule"/>
</dbReference>
<dbReference type="CDD" id="cd09294">
    <property type="entry name" value="SmpB"/>
    <property type="match status" value="1"/>
</dbReference>
<dbReference type="Gene3D" id="2.40.280.10">
    <property type="match status" value="1"/>
</dbReference>
<dbReference type="HAMAP" id="MF_00023">
    <property type="entry name" value="SmpB"/>
    <property type="match status" value="1"/>
</dbReference>
<dbReference type="InterPro" id="IPR023620">
    <property type="entry name" value="SmpB"/>
</dbReference>
<dbReference type="InterPro" id="IPR000037">
    <property type="entry name" value="SsrA-bd_prot"/>
</dbReference>
<dbReference type="InterPro" id="IPR020081">
    <property type="entry name" value="SsrA-bd_prot_CS"/>
</dbReference>
<dbReference type="NCBIfam" id="NF003843">
    <property type="entry name" value="PRK05422.1"/>
    <property type="match status" value="1"/>
</dbReference>
<dbReference type="NCBIfam" id="TIGR00086">
    <property type="entry name" value="smpB"/>
    <property type="match status" value="1"/>
</dbReference>
<dbReference type="PANTHER" id="PTHR30308:SF2">
    <property type="entry name" value="SSRA-BINDING PROTEIN"/>
    <property type="match status" value="1"/>
</dbReference>
<dbReference type="PANTHER" id="PTHR30308">
    <property type="entry name" value="TMRNA-BINDING COMPONENT OF TRANS-TRANSLATION TAGGING COMPLEX"/>
    <property type="match status" value="1"/>
</dbReference>
<dbReference type="Pfam" id="PF01668">
    <property type="entry name" value="SmpB"/>
    <property type="match status" value="1"/>
</dbReference>
<dbReference type="SUPFAM" id="SSF74982">
    <property type="entry name" value="Small protein B (SmpB)"/>
    <property type="match status" value="1"/>
</dbReference>
<dbReference type="PROSITE" id="PS01317">
    <property type="entry name" value="SSRP"/>
    <property type="match status" value="1"/>
</dbReference>
<protein>
    <recommendedName>
        <fullName evidence="1">SsrA-binding protein</fullName>
    </recommendedName>
    <alternativeName>
        <fullName evidence="1">Small protein B</fullName>
    </alternativeName>
</protein>
<keyword id="KW-0963">Cytoplasm</keyword>
<keyword id="KW-0694">RNA-binding</keyword>
<evidence type="ECO:0000255" key="1">
    <source>
        <dbReference type="HAMAP-Rule" id="MF_00023"/>
    </source>
</evidence>
<accession>C1CRS4</accession>
<name>SSRP_STRZT</name>
<organism>
    <name type="scientific">Streptococcus pneumoniae (strain Taiwan19F-14)</name>
    <dbReference type="NCBI Taxonomy" id="487213"/>
    <lineage>
        <taxon>Bacteria</taxon>
        <taxon>Bacillati</taxon>
        <taxon>Bacillota</taxon>
        <taxon>Bacilli</taxon>
        <taxon>Lactobacillales</taxon>
        <taxon>Streptococcaceae</taxon>
        <taxon>Streptococcus</taxon>
    </lineage>
</organism>
<comment type="function">
    <text evidence="1">Required for rescue of stalled ribosomes mediated by trans-translation. Binds to transfer-messenger RNA (tmRNA), required for stable association of tmRNA with ribosomes. tmRNA and SmpB together mimic tRNA shape, replacing the anticodon stem-loop with SmpB. tmRNA is encoded by the ssrA gene; the 2 termini fold to resemble tRNA(Ala) and it encodes a 'tag peptide', a short internal open reading frame. During trans-translation Ala-aminoacylated tmRNA acts like a tRNA, entering the A-site of stalled ribosomes, displacing the stalled mRNA. The ribosome then switches to translate the ORF on the tmRNA; the nascent peptide is terminated with the 'tag peptide' encoded by the tmRNA and targeted for degradation. The ribosome is freed to recommence translation, which seems to be the essential function of trans-translation.</text>
</comment>
<comment type="subcellular location">
    <subcellularLocation>
        <location evidence="1">Cytoplasm</location>
    </subcellularLocation>
    <text evidence="1">The tmRNA-SmpB complex associates with stalled 70S ribosomes.</text>
</comment>
<comment type="similarity">
    <text evidence="1">Belongs to the SmpB family.</text>
</comment>